<proteinExistence type="inferred from homology"/>
<dbReference type="EC" id="4.2.2.n2" evidence="1"/>
<dbReference type="EMBL" id="FM180568">
    <property type="protein sequence ID" value="CAS08860.1"/>
    <property type="molecule type" value="Genomic_DNA"/>
</dbReference>
<dbReference type="EMBL" id="U85771">
    <property type="protein sequence ID" value="AAB42089.1"/>
    <property type="molecule type" value="Genomic_DNA"/>
</dbReference>
<dbReference type="RefSeq" id="WP_001339587.1">
    <property type="nucleotide sequence ID" value="NC_011601.1"/>
</dbReference>
<dbReference type="SMR" id="B7UQ77"/>
<dbReference type="CAZy" id="GH23">
    <property type="family name" value="Glycoside Hydrolase Family 23"/>
</dbReference>
<dbReference type="KEGG" id="ecg:E2348C_1312"/>
<dbReference type="HOGENOM" id="CLU_103257_0_0_6"/>
<dbReference type="Proteomes" id="UP000008205">
    <property type="component" value="Chromosome"/>
</dbReference>
<dbReference type="GO" id="GO:0009279">
    <property type="term" value="C:cell outer membrane"/>
    <property type="evidence" value="ECO:0007669"/>
    <property type="project" value="UniProtKB-SubCell"/>
</dbReference>
<dbReference type="GO" id="GO:0008932">
    <property type="term" value="F:lytic endotransglycosylase activity"/>
    <property type="evidence" value="ECO:0007669"/>
    <property type="project" value="InterPro"/>
</dbReference>
<dbReference type="GO" id="GO:0016998">
    <property type="term" value="P:cell wall macromolecule catabolic process"/>
    <property type="evidence" value="ECO:0007669"/>
    <property type="project" value="UniProtKB-UniRule"/>
</dbReference>
<dbReference type="GO" id="GO:0071555">
    <property type="term" value="P:cell wall organization"/>
    <property type="evidence" value="ECO:0007669"/>
    <property type="project" value="UniProtKB-KW"/>
</dbReference>
<dbReference type="GO" id="GO:0000270">
    <property type="term" value="P:peptidoglycan metabolic process"/>
    <property type="evidence" value="ECO:0007669"/>
    <property type="project" value="InterPro"/>
</dbReference>
<dbReference type="CDD" id="cd16893">
    <property type="entry name" value="LT_MltC_MltE"/>
    <property type="match status" value="1"/>
</dbReference>
<dbReference type="FunFam" id="1.10.530.10:FF:000007">
    <property type="entry name" value="Endo-type membrane-bound lytic murein transglycosylase A"/>
    <property type="match status" value="1"/>
</dbReference>
<dbReference type="Gene3D" id="1.10.530.10">
    <property type="match status" value="1"/>
</dbReference>
<dbReference type="HAMAP" id="MF_01381">
    <property type="entry name" value="EmtA"/>
    <property type="match status" value="1"/>
</dbReference>
<dbReference type="InterPro" id="IPR023946">
    <property type="entry name" value="EmtA"/>
</dbReference>
<dbReference type="InterPro" id="IPR023346">
    <property type="entry name" value="Lysozyme-like_dom_sf"/>
</dbReference>
<dbReference type="InterPro" id="IPR000189">
    <property type="entry name" value="Transglyc_AS"/>
</dbReference>
<dbReference type="InterPro" id="IPR008258">
    <property type="entry name" value="Transglycosylase_SLT_dom_1"/>
</dbReference>
<dbReference type="NCBIfam" id="NF012014">
    <property type="entry name" value="PRK15470.1"/>
    <property type="match status" value="1"/>
</dbReference>
<dbReference type="PANTHER" id="PTHR37423:SF4">
    <property type="entry name" value="ENDO-TYPE MEMBRANE-BOUND LYTIC MUREIN TRANSGLYCOSYLASE A"/>
    <property type="match status" value="1"/>
</dbReference>
<dbReference type="PANTHER" id="PTHR37423">
    <property type="entry name" value="SOLUBLE LYTIC MUREIN TRANSGLYCOSYLASE-RELATED"/>
    <property type="match status" value="1"/>
</dbReference>
<dbReference type="Pfam" id="PF01464">
    <property type="entry name" value="SLT"/>
    <property type="match status" value="1"/>
</dbReference>
<dbReference type="SUPFAM" id="SSF53955">
    <property type="entry name" value="Lysozyme-like"/>
    <property type="match status" value="1"/>
</dbReference>
<dbReference type="PROSITE" id="PS51257">
    <property type="entry name" value="PROKAR_LIPOPROTEIN"/>
    <property type="match status" value="1"/>
</dbReference>
<dbReference type="PROSITE" id="PS00922">
    <property type="entry name" value="TRANSGLYCOSYLASE"/>
    <property type="match status" value="1"/>
</dbReference>
<gene>
    <name evidence="1" type="primary">emtA</name>
    <name type="synonym">sltZ</name>
    <name type="ordered locus">E2348C_1312</name>
</gene>
<name>EMTA_ECO27</name>
<protein>
    <recommendedName>
        <fullName evidence="1">Endo-type membrane-bound lytic murein transglycosylase A</fullName>
        <ecNumber evidence="1">4.2.2.n2</ecNumber>
    </recommendedName>
    <alternativeName>
        <fullName evidence="1">Peptidoglycan lytic endotransglycosylase</fullName>
    </alternativeName>
</protein>
<reference key="1">
    <citation type="journal article" date="2009" name="J. Bacteriol.">
        <title>Complete genome sequence and comparative genome analysis of enteropathogenic Escherichia coli O127:H6 strain E2348/69.</title>
        <authorList>
            <person name="Iguchi A."/>
            <person name="Thomson N.R."/>
            <person name="Ogura Y."/>
            <person name="Saunders D."/>
            <person name="Ooka T."/>
            <person name="Henderson I.R."/>
            <person name="Harris D."/>
            <person name="Asadulghani M."/>
            <person name="Kurokawa K."/>
            <person name="Dean P."/>
            <person name="Kenny B."/>
            <person name="Quail M.A."/>
            <person name="Thurston S."/>
            <person name="Dougan G."/>
            <person name="Hayashi T."/>
            <person name="Parkhill J."/>
            <person name="Frankel G."/>
        </authorList>
    </citation>
    <scope>NUCLEOTIDE SEQUENCE [LARGE SCALE GENOMIC DNA]</scope>
    <source>
        <strain>E2348/69 / EPEC</strain>
    </source>
</reference>
<reference key="2">
    <citation type="submission" date="1997-01" db="EMBL/GenBank/DDBJ databases">
        <authorList>
            <person name="Haigh R.D."/>
            <person name="Willliams P.H."/>
        </authorList>
    </citation>
    <scope>NUCLEOTIDE SEQUENCE [GENOMIC DNA] OF 37-203</scope>
</reference>
<evidence type="ECO:0000255" key="1">
    <source>
        <dbReference type="HAMAP-Rule" id="MF_01381"/>
    </source>
</evidence>
<evidence type="ECO:0000305" key="2"/>
<feature type="signal peptide" evidence="1">
    <location>
        <begin position="1"/>
        <end position="15"/>
    </location>
</feature>
<feature type="chain" id="PRO_0000372763" description="Endo-type membrane-bound lytic murein transglycosylase A">
    <location>
        <begin position="16"/>
        <end position="203"/>
    </location>
</feature>
<feature type="lipid moiety-binding region" description="N-palmitoyl cysteine" evidence="1">
    <location>
        <position position="16"/>
    </location>
</feature>
<feature type="lipid moiety-binding region" description="S-diacylglycerol cysteine" evidence="1">
    <location>
        <position position="16"/>
    </location>
</feature>
<feature type="sequence conflict" description="In Ref. 2; AAB42089." evidence="2" ref="2">
    <original>S</original>
    <variation>T</variation>
    <location>
        <position position="166"/>
    </location>
</feature>
<feature type="sequence conflict" description="In Ref. 2; AAB42089." evidence="2" ref="2">
    <original>A</original>
    <variation>S</variation>
    <location>
        <position position="173"/>
    </location>
</feature>
<organism>
    <name type="scientific">Escherichia coli O127:H6 (strain E2348/69 / EPEC)</name>
    <dbReference type="NCBI Taxonomy" id="574521"/>
    <lineage>
        <taxon>Bacteria</taxon>
        <taxon>Pseudomonadati</taxon>
        <taxon>Pseudomonadota</taxon>
        <taxon>Gammaproteobacteria</taxon>
        <taxon>Enterobacterales</taxon>
        <taxon>Enterobacteriaceae</taxon>
        <taxon>Escherichia</taxon>
    </lineage>
</organism>
<accession>B7UQ77</accession>
<accession>O87500</accession>
<accession>P76009</accession>
<accession>P94775</accession>
<comment type="function">
    <text evidence="1">Murein-degrading enzyme. May play a role in recycling of muropeptides during cell elongation and/or cell division. Preferentially cleaves at a distance of more than two disaccharide units from the ends of the glycan chain.</text>
</comment>
<comment type="catalytic activity">
    <reaction evidence="1">
        <text>Endolytic cleavage of the (1-&gt;4)-beta-glycosidic linkage between N-acetylmuramic acid (MurNAc) and N-acetylglucosamine (GlcNAc) residues in peptidoglycan with concomitant formation of a 1,6-anhydrobond in the MurNAc residue.</text>
        <dbReference type="EC" id="4.2.2.n2"/>
    </reaction>
</comment>
<comment type="subcellular location">
    <subcellularLocation>
        <location evidence="1">Cell outer membrane</location>
        <topology evidence="1">Lipid-anchor</topology>
    </subcellularLocation>
</comment>
<comment type="similarity">
    <text evidence="1">Belongs to the transglycosylase Slt family.</text>
</comment>
<sequence>MKLRWFAFLIVLLAGCSSKHDYTNPPWNAKVPVQRAMQWMPISQKAGAAWGVDPQLITAIIAIESGGNPNAVSKSNAIGLMQIKASTSGRDVYRRMGWSGEPTTSELKNPERNISMGAAYLNILETGPLAGIEDPKVLQYALVVSYANGAGALLRTFSSDRKKAISKINDLDADEFLEHVARNHPAPQAPRYIYKLEQALDAM</sequence>
<keyword id="KW-0998">Cell outer membrane</keyword>
<keyword id="KW-0961">Cell wall biogenesis/degradation</keyword>
<keyword id="KW-0449">Lipoprotein</keyword>
<keyword id="KW-0456">Lyase</keyword>
<keyword id="KW-0472">Membrane</keyword>
<keyword id="KW-0564">Palmitate</keyword>
<keyword id="KW-1185">Reference proteome</keyword>
<keyword id="KW-0732">Signal</keyword>